<comment type="function">
    <text evidence="2 3">Cytokine that acts as a ligand to CD40/TNFRSF5 (By similarity). Costimulates T-cell proliferation and cytokine production (By similarity). Its cross-linking on T-cells generates a costimulatory signal which enhances the production of IL4 and IL10 in conjunction with the TCR/CD3 ligation and CD28 costimulation (By similarity). Induces the activation of NF-kappa-B (By similarity). Induces the activation of kinases MAPK8 and PAK2 in T-cells (By similarity). Mediates B-cell proliferation in the absence of co-stimulus as well as IgE production in the presence of IL4 (By similarity). Involved in immunoglobulin class switching (By similarity).</text>
</comment>
<comment type="function">
    <molecule>CD40 ligand, soluble form</molecule>
    <text evidence="3">Acts as a ligand for integrins, specifically ITGA5:ITGB1 and ITGAV:ITGB3; both integrins and the CD40 receptor are required for activation of CD40-CD40LG signaling, which have cell-type dependent effects, such as B-cell activation, NF-kappa-B signaling and anti-apoptotic signaling.</text>
</comment>
<comment type="subunit">
    <text evidence="3">Homotrimer (By similarity). Interacts with CD28 (By similarity). CD40 ligand, soluble form: Exists as either a monomer or a homotrimer (By similarity). Forms a ternary complex between CD40 and integrins for CD40-CD40LG signaling (By similarity).</text>
</comment>
<comment type="subcellular location">
    <subcellularLocation>
        <location evidence="3">Cell membrane</location>
        <topology evidence="3">Single-pass type II membrane protein</topology>
    </subcellularLocation>
    <subcellularLocation>
        <location evidence="3">Cell surface</location>
    </subcellularLocation>
</comment>
<comment type="subcellular location">
    <molecule>CD40 ligand, soluble form</molecule>
    <subcellularLocation>
        <location evidence="3">Secreted</location>
    </subcellularLocation>
    <text evidence="3">Release of soluble CD40L from platelets is partially regulated by GP IIb/IIIa, actin polymerization, and a matrix metalloproteinases (MMP) inhibitor-sensitive pathway.</text>
</comment>
<comment type="PTM">
    <text evidence="3">The soluble form derives from the membrane form by proteolytic processing.</text>
</comment>
<comment type="similarity">
    <text evidence="6">Belongs to the tumor necrosis factor family.</text>
</comment>
<proteinExistence type="evidence at transcript level"/>
<feature type="chain" id="PRO_0000034482" description="CD40 ligand, membrane form">
    <location>
        <begin position="1"/>
        <end position="260"/>
    </location>
</feature>
<feature type="chain" id="PRO_0000034483" description="CD40 ligand, soluble form" evidence="3">
    <location>
        <begin position="112"/>
        <end position="260"/>
    </location>
</feature>
<feature type="topological domain" description="Cytoplasmic" evidence="4">
    <location>
        <begin position="1"/>
        <end position="22"/>
    </location>
</feature>
<feature type="transmembrane region" description="Helical; Signal-anchor for type II membrane protein" evidence="4">
    <location>
        <begin position="23"/>
        <end position="46"/>
    </location>
</feature>
<feature type="topological domain" description="Extracellular" evidence="4">
    <location>
        <begin position="47"/>
        <end position="260"/>
    </location>
</feature>
<feature type="domain" description="THD" evidence="5">
    <location>
        <begin position="121"/>
        <end position="260"/>
    </location>
</feature>
<feature type="site" description="Cleavage" evidence="1">
    <location>
        <begin position="111"/>
        <end position="112"/>
    </location>
</feature>
<feature type="glycosylation site" description="N-linked (GlcNAc...) asparagine" evidence="4">
    <location>
        <position position="239"/>
    </location>
</feature>
<feature type="disulfide bond" evidence="5">
    <location>
        <begin position="177"/>
        <end position="217"/>
    </location>
</feature>
<dbReference type="EMBL" id="AF079105">
    <property type="protein sequence ID" value="AAD02954.1"/>
    <property type="molecule type" value="mRNA"/>
</dbReference>
<dbReference type="RefSeq" id="NP_001009298.1">
    <property type="nucleotide sequence ID" value="NM_001009298.1"/>
</dbReference>
<dbReference type="SMR" id="O97605"/>
<dbReference type="FunCoup" id="O97605">
    <property type="interactions" value="36"/>
</dbReference>
<dbReference type="STRING" id="9685.ENSFCAP00000033038"/>
<dbReference type="GlyCosmos" id="O97605">
    <property type="glycosylation" value="1 site, No reported glycans"/>
</dbReference>
<dbReference type="PaxDb" id="9685-ENSFCAP00000003839"/>
<dbReference type="Ensembl" id="ENSFCAT00000043435.3">
    <property type="protein sequence ID" value="ENSFCAP00000033038.1"/>
    <property type="gene ID" value="ENSFCAG00000039949.3"/>
</dbReference>
<dbReference type="GeneID" id="493850"/>
<dbReference type="KEGG" id="fca:493850"/>
<dbReference type="CTD" id="959"/>
<dbReference type="eggNOG" id="KOG3656">
    <property type="taxonomic scope" value="Eukaryota"/>
</dbReference>
<dbReference type="GeneTree" id="ENSGT01130000278318"/>
<dbReference type="HOGENOM" id="CLU_093203_0_0_1"/>
<dbReference type="InParanoid" id="O97605"/>
<dbReference type="OMA" id="VSFCTKA"/>
<dbReference type="OrthoDB" id="8667946at2759"/>
<dbReference type="Proteomes" id="UP000011712">
    <property type="component" value="Chromosome X"/>
</dbReference>
<dbReference type="Bgee" id="ENSFCAG00000039949">
    <property type="expression patterns" value="Expressed in spleen and 3 other cell types or tissues"/>
</dbReference>
<dbReference type="GO" id="GO:0009986">
    <property type="term" value="C:cell surface"/>
    <property type="evidence" value="ECO:0000250"/>
    <property type="project" value="UniProtKB"/>
</dbReference>
<dbReference type="GO" id="GO:0009897">
    <property type="term" value="C:external side of plasma membrane"/>
    <property type="evidence" value="ECO:0007669"/>
    <property type="project" value="Ensembl"/>
</dbReference>
<dbReference type="GO" id="GO:0005615">
    <property type="term" value="C:extracellular space"/>
    <property type="evidence" value="ECO:0000318"/>
    <property type="project" value="GO_Central"/>
</dbReference>
<dbReference type="GO" id="GO:0005794">
    <property type="term" value="C:Golgi apparatus"/>
    <property type="evidence" value="ECO:0007669"/>
    <property type="project" value="Ensembl"/>
</dbReference>
<dbReference type="GO" id="GO:0005174">
    <property type="term" value="F:CD40 receptor binding"/>
    <property type="evidence" value="ECO:0000250"/>
    <property type="project" value="UniProtKB"/>
</dbReference>
<dbReference type="GO" id="GO:0005125">
    <property type="term" value="F:cytokine activity"/>
    <property type="evidence" value="ECO:0000318"/>
    <property type="project" value="GO_Central"/>
</dbReference>
<dbReference type="GO" id="GO:0005178">
    <property type="term" value="F:integrin binding"/>
    <property type="evidence" value="ECO:0007669"/>
    <property type="project" value="Ensembl"/>
</dbReference>
<dbReference type="GO" id="GO:0043539">
    <property type="term" value="F:protein serine/threonine kinase activator activity"/>
    <property type="evidence" value="ECO:0000250"/>
    <property type="project" value="UniProtKB"/>
</dbReference>
<dbReference type="GO" id="GO:0005164">
    <property type="term" value="F:tumor necrosis factor receptor binding"/>
    <property type="evidence" value="ECO:0007669"/>
    <property type="project" value="InterPro"/>
</dbReference>
<dbReference type="GO" id="GO:0030183">
    <property type="term" value="P:B cell differentiation"/>
    <property type="evidence" value="ECO:0007669"/>
    <property type="project" value="Ensembl"/>
</dbReference>
<dbReference type="GO" id="GO:0042100">
    <property type="term" value="P:B cell proliferation"/>
    <property type="evidence" value="ECO:0000250"/>
    <property type="project" value="UniProtKB"/>
</dbReference>
<dbReference type="GO" id="GO:0023035">
    <property type="term" value="P:CD40 signaling pathway"/>
    <property type="evidence" value="ECO:0007669"/>
    <property type="project" value="Ensembl"/>
</dbReference>
<dbReference type="GO" id="GO:0007166">
    <property type="term" value="P:cell surface receptor signaling pathway"/>
    <property type="evidence" value="ECO:0000318"/>
    <property type="project" value="GO_Central"/>
</dbReference>
<dbReference type="GO" id="GO:0006954">
    <property type="term" value="P:inflammatory response"/>
    <property type="evidence" value="ECO:0000250"/>
    <property type="project" value="UniProtKB"/>
</dbReference>
<dbReference type="GO" id="GO:0007229">
    <property type="term" value="P:integrin-mediated signaling pathway"/>
    <property type="evidence" value="ECO:0007669"/>
    <property type="project" value="Ensembl"/>
</dbReference>
<dbReference type="GO" id="GO:0045190">
    <property type="term" value="P:isotype switching"/>
    <property type="evidence" value="ECO:0007669"/>
    <property type="project" value="Ensembl"/>
</dbReference>
<dbReference type="GO" id="GO:0043066">
    <property type="term" value="P:negative regulation of apoptotic process"/>
    <property type="evidence" value="ECO:0007669"/>
    <property type="project" value="Ensembl"/>
</dbReference>
<dbReference type="GO" id="GO:0030168">
    <property type="term" value="P:platelet activation"/>
    <property type="evidence" value="ECO:0000250"/>
    <property type="project" value="UniProtKB"/>
</dbReference>
<dbReference type="GO" id="GO:0043123">
    <property type="term" value="P:positive regulation of canonical NF-kappaB signal transduction"/>
    <property type="evidence" value="ECO:0000318"/>
    <property type="project" value="GO_Central"/>
</dbReference>
<dbReference type="GO" id="GO:2000353">
    <property type="term" value="P:positive regulation of endothelial cell apoptotic process"/>
    <property type="evidence" value="ECO:0007669"/>
    <property type="project" value="Ensembl"/>
</dbReference>
<dbReference type="GO" id="GO:2001238">
    <property type="term" value="P:positive regulation of extrinsic apoptotic signaling pathway"/>
    <property type="evidence" value="ECO:0000318"/>
    <property type="project" value="GO_Central"/>
</dbReference>
<dbReference type="GO" id="GO:0032733">
    <property type="term" value="P:positive regulation of interleukin-10 production"/>
    <property type="evidence" value="ECO:0000250"/>
    <property type="project" value="UniProtKB"/>
</dbReference>
<dbReference type="GO" id="GO:0032735">
    <property type="term" value="P:positive regulation of interleukin-12 production"/>
    <property type="evidence" value="ECO:0007669"/>
    <property type="project" value="Ensembl"/>
</dbReference>
<dbReference type="GO" id="GO:0032753">
    <property type="term" value="P:positive regulation of interleukin-4 production"/>
    <property type="evidence" value="ECO:0000250"/>
    <property type="project" value="UniProtKB"/>
</dbReference>
<dbReference type="GO" id="GO:0051092">
    <property type="term" value="P:positive regulation of NF-kappaB transcription factor activity"/>
    <property type="evidence" value="ECO:0000250"/>
    <property type="project" value="UniProtKB"/>
</dbReference>
<dbReference type="GO" id="GO:0042102">
    <property type="term" value="P:positive regulation of T cell proliferation"/>
    <property type="evidence" value="ECO:0000250"/>
    <property type="project" value="UniProtKB"/>
</dbReference>
<dbReference type="GO" id="GO:0002637">
    <property type="term" value="P:regulation of immunoglobulin production"/>
    <property type="evidence" value="ECO:0007669"/>
    <property type="project" value="Ensembl"/>
</dbReference>
<dbReference type="CDD" id="cd00184">
    <property type="entry name" value="TNF"/>
    <property type="match status" value="1"/>
</dbReference>
<dbReference type="FunFam" id="2.60.120.40:FF:000013">
    <property type="entry name" value="CD40 ligand"/>
    <property type="match status" value="1"/>
</dbReference>
<dbReference type="Gene3D" id="2.60.120.40">
    <property type="match status" value="1"/>
</dbReference>
<dbReference type="InterPro" id="IPR003263">
    <property type="entry name" value="CD40L"/>
</dbReference>
<dbReference type="InterPro" id="IPR021184">
    <property type="entry name" value="TNF_CS"/>
</dbReference>
<dbReference type="InterPro" id="IPR006052">
    <property type="entry name" value="TNF_dom"/>
</dbReference>
<dbReference type="InterPro" id="IPR008983">
    <property type="entry name" value="Tumour_necrosis_fac-like_dom"/>
</dbReference>
<dbReference type="PANTHER" id="PTHR11471:SF5">
    <property type="entry name" value="CD40 LIGAND"/>
    <property type="match status" value="1"/>
</dbReference>
<dbReference type="PANTHER" id="PTHR11471">
    <property type="entry name" value="TUMOR NECROSIS FACTOR FAMILY MEMBER"/>
    <property type="match status" value="1"/>
</dbReference>
<dbReference type="Pfam" id="PF00229">
    <property type="entry name" value="TNF"/>
    <property type="match status" value="1"/>
</dbReference>
<dbReference type="PIRSF" id="PIRSF016527">
    <property type="entry name" value="TNF_5"/>
    <property type="match status" value="1"/>
</dbReference>
<dbReference type="PRINTS" id="PR01702">
    <property type="entry name" value="CD40LIGAND"/>
</dbReference>
<dbReference type="SMART" id="SM00207">
    <property type="entry name" value="TNF"/>
    <property type="match status" value="1"/>
</dbReference>
<dbReference type="SUPFAM" id="SSF49842">
    <property type="entry name" value="TNF-like"/>
    <property type="match status" value="1"/>
</dbReference>
<dbReference type="PROSITE" id="PS00251">
    <property type="entry name" value="THD_1"/>
    <property type="match status" value="1"/>
</dbReference>
<dbReference type="PROSITE" id="PS50049">
    <property type="entry name" value="THD_2"/>
    <property type="match status" value="1"/>
</dbReference>
<evidence type="ECO:0000250" key="1"/>
<evidence type="ECO:0000250" key="2">
    <source>
        <dbReference type="UniProtKB" id="P27548"/>
    </source>
</evidence>
<evidence type="ECO:0000250" key="3">
    <source>
        <dbReference type="UniProtKB" id="P29965"/>
    </source>
</evidence>
<evidence type="ECO:0000255" key="4"/>
<evidence type="ECO:0000255" key="5">
    <source>
        <dbReference type="PROSITE-ProRule" id="PRU01387"/>
    </source>
</evidence>
<evidence type="ECO:0000305" key="6"/>
<accession>O97605</accession>
<organism>
    <name type="scientific">Felis catus</name>
    <name type="common">Cat</name>
    <name type="synonym">Felis silvestris catus</name>
    <dbReference type="NCBI Taxonomy" id="9685"/>
    <lineage>
        <taxon>Eukaryota</taxon>
        <taxon>Metazoa</taxon>
        <taxon>Chordata</taxon>
        <taxon>Craniata</taxon>
        <taxon>Vertebrata</taxon>
        <taxon>Euteleostomi</taxon>
        <taxon>Mammalia</taxon>
        <taxon>Eutheria</taxon>
        <taxon>Laurasiatheria</taxon>
        <taxon>Carnivora</taxon>
        <taxon>Feliformia</taxon>
        <taxon>Felidae</taxon>
        <taxon>Felinae</taxon>
        <taxon>Felis</taxon>
    </lineage>
</organism>
<protein>
    <recommendedName>
        <fullName>CD40 ligand</fullName>
        <shortName>CD40-L</shortName>
    </recommendedName>
    <alternativeName>
        <fullName>Tumor necrosis factor ligand superfamily member 5</fullName>
    </alternativeName>
    <cdAntigenName>CD154</cdAntigenName>
    <component>
        <recommendedName>
            <fullName>CD40 ligand, membrane form</fullName>
        </recommendedName>
    </component>
    <component>
        <recommendedName>
            <fullName evidence="3">CD40 ligand, soluble form</fullName>
            <shortName evidence="3">sCD40L</shortName>
        </recommendedName>
    </component>
</protein>
<keyword id="KW-1003">Cell membrane</keyword>
<keyword id="KW-0202">Cytokine</keyword>
<keyword id="KW-1015">Disulfide bond</keyword>
<keyword id="KW-0325">Glycoprotein</keyword>
<keyword id="KW-0472">Membrane</keyword>
<keyword id="KW-1185">Reference proteome</keyword>
<keyword id="KW-0964">Secreted</keyword>
<keyword id="KW-0735">Signal-anchor</keyword>
<keyword id="KW-0812">Transmembrane</keyword>
<keyword id="KW-1133">Transmembrane helix</keyword>
<gene>
    <name type="primary">CD40LG</name>
    <name type="synonym">CD40L</name>
    <name type="synonym">TNFSF5</name>
</gene>
<name>CD40L_FELCA</name>
<reference key="1">
    <citation type="submission" date="1998-07" db="EMBL/GenBank/DDBJ databases">
        <title>Adjuvant properties of feline CD154 (CD40 ligand).</title>
        <authorList>
            <person name="Hosie M.J."/>
            <person name="Willett B.J."/>
        </authorList>
    </citation>
    <scope>NUCLEOTIDE SEQUENCE [MRNA]</scope>
    <source>
        <tissue>Thymus</tissue>
    </source>
</reference>
<sequence>MIETYSQTAPRSVAPGPPVSMKIFMYLLTVFLITQMIGSALFAVYLHRRLDKIEDERNLYEDFVFMKTLQKCNKGEGALSLLNCEEIKSRFEAFLKEIMLNKETKKEKNVAMQKGDQDPRVAAHVISEASSSTASVLQWAPKGYYTISSNLVTLENGKQLAVKRQGLYYIYAQVTFCSNREASSQAPFIASLCLHSPSGSERVLLRAANARSSSKPCGQQSIHLGGVFELHPGASVFVNVTDPSQVSHGTGFTSFGLLKL</sequence>